<feature type="peptide" id="PRO_0000044655" description="Ranatuerin-2BYa">
    <location>
        <begin position="1"/>
        <end position="32"/>
    </location>
</feature>
<feature type="disulfide bond" evidence="1">
    <location>
        <begin position="27"/>
        <end position="32"/>
    </location>
</feature>
<keyword id="KW-0878">Amphibian defense peptide</keyword>
<keyword id="KW-0044">Antibiotic</keyword>
<keyword id="KW-0929">Antimicrobial</keyword>
<keyword id="KW-0204">Cytolysis</keyword>
<keyword id="KW-0903">Direct protein sequencing</keyword>
<keyword id="KW-1015">Disulfide bond</keyword>
<keyword id="KW-0354">Hemolysis</keyword>
<keyword id="KW-0964">Secreted</keyword>
<organism>
    <name type="scientific">Rana boylii</name>
    <name type="common">Foothill yellow-legged frog</name>
    <dbReference type="NCBI Taxonomy" id="160499"/>
    <lineage>
        <taxon>Eukaryota</taxon>
        <taxon>Metazoa</taxon>
        <taxon>Chordata</taxon>
        <taxon>Craniata</taxon>
        <taxon>Vertebrata</taxon>
        <taxon>Euteleostomi</taxon>
        <taxon>Amphibia</taxon>
        <taxon>Batrachia</taxon>
        <taxon>Anura</taxon>
        <taxon>Neobatrachia</taxon>
        <taxon>Ranoidea</taxon>
        <taxon>Ranidae</taxon>
        <taxon>Rana</taxon>
        <taxon>Rana</taxon>
    </lineage>
</organism>
<dbReference type="SMR" id="P84114"/>
<dbReference type="GO" id="GO:0005576">
    <property type="term" value="C:extracellular region"/>
    <property type="evidence" value="ECO:0007669"/>
    <property type="project" value="UniProtKB-SubCell"/>
</dbReference>
<dbReference type="GO" id="GO:0042742">
    <property type="term" value="P:defense response to bacterium"/>
    <property type="evidence" value="ECO:0007669"/>
    <property type="project" value="UniProtKB-KW"/>
</dbReference>
<dbReference type="GO" id="GO:0031640">
    <property type="term" value="P:killing of cells of another organism"/>
    <property type="evidence" value="ECO:0007669"/>
    <property type="project" value="UniProtKB-KW"/>
</dbReference>
<dbReference type="InterPro" id="IPR012521">
    <property type="entry name" value="Antimicrobial_frog_2"/>
</dbReference>
<dbReference type="Pfam" id="PF08023">
    <property type="entry name" value="Antimicrobial_2"/>
    <property type="match status" value="1"/>
</dbReference>
<name>RN2A_RANBO</name>
<comment type="function">
    <text evidence="1">Antibacterial activity against Gram-positive bacterium S.aureus and Gram-negative bacterium E.coli. Weak hemolytic activity.</text>
</comment>
<comment type="subcellular location">
    <subcellularLocation>
        <location evidence="1">Secreted</location>
    </subcellularLocation>
</comment>
<comment type="tissue specificity">
    <text>Expressed by the skin glands.</text>
</comment>
<comment type="mass spectrometry" mass="3306.8" method="MALDI" evidence="1"/>
<comment type="similarity">
    <text evidence="1">Belongs to the frog skin active peptide (FSAP) family. Ranatuerin subfamily.</text>
</comment>
<protein>
    <recommendedName>
        <fullName>Ranatuerin-2BYa</fullName>
    </recommendedName>
</protein>
<evidence type="ECO:0000269" key="1">
    <source>
    </source>
</evidence>
<evidence type="ECO:0000305" key="2"/>
<proteinExistence type="evidence at protein level"/>
<accession>P84114</accession>
<reference evidence="2" key="1">
    <citation type="journal article" date="2003" name="J. Pept. Res.">
        <title>Isolation of peptides of the brevinin-1 family with potent candidacidal activity from the skin secretions of the frog Rana boylii.</title>
        <authorList>
            <person name="Conlon J.M."/>
            <person name="Sonnevend A."/>
            <person name="Patel M."/>
            <person name="Davidson C."/>
            <person name="Nielsen P.F."/>
            <person name="Pal T."/>
            <person name="Rollins-Smith L.A."/>
        </authorList>
    </citation>
    <scope>PROTEIN SEQUENCE</scope>
    <scope>FUNCTION</scope>
    <scope>MASS SPECTROMETRY</scope>
    <source>
        <tissue evidence="1">Skin secretion</tissue>
    </source>
</reference>
<sequence length="32" mass="3311">GILSTFKGLAKGVAKDLAGNLLDKFKCKITGC</sequence>